<sequence length="95" mass="10325">MSDDNGSGNNCTTNHFLLYGSLGLGGLLLLLVIILFICLCGFSQRVKRLERNAQVSGQEPHYASLQQLPVSSSDITDMKEDLSTDYACIARSTPT</sequence>
<keyword id="KW-0025">Alternative splicing</keyword>
<keyword id="KW-0133">Cell shape</keyword>
<keyword id="KW-0391">Immunity</keyword>
<keyword id="KW-0472">Membrane</keyword>
<keyword id="KW-0597">Phosphoprotein</keyword>
<keyword id="KW-1185">Reference proteome</keyword>
<keyword id="KW-0812">Transmembrane</keyword>
<keyword id="KW-1133">Transmembrane helix</keyword>
<name>LST1_MOUSE</name>
<accession>O08843</accession>
<accession>O08844</accession>
<accession>Q9Z1H3</accession>
<accession>Q9Z1R0</accession>
<feature type="chain" id="PRO_0000084509" description="Leukocyte-specific transcript 1 protein">
    <location>
        <begin position="1"/>
        <end position="95"/>
    </location>
</feature>
<feature type="transmembrane region" description="Helical" evidence="3">
    <location>
        <begin position="22"/>
        <end position="42"/>
    </location>
</feature>
<feature type="modified residue" description="Phosphoserine" evidence="2">
    <location>
        <position position="64"/>
    </location>
</feature>
<feature type="splice variant" id="VSP_050588" description="In isoform 2." evidence="8 9">
    <location>
        <begin position="53"/>
        <end position="66"/>
    </location>
</feature>
<feature type="sequence conflict" description="In Ref. 2 and 3." evidence="10" ref="2 3">
    <original>H</original>
    <variation>D</variation>
    <location>
        <position position="15"/>
    </location>
</feature>
<feature type="sequence conflict" description="In Ref. 2 and 3." evidence="10" ref="2 3">
    <original>Y</original>
    <variation>N</variation>
    <location>
        <position position="19"/>
    </location>
</feature>
<feature type="sequence conflict" description="In Ref. 2 and 3." evidence="10" ref="2 3">
    <original>G</original>
    <variation>R</variation>
    <location>
        <position position="41"/>
    </location>
</feature>
<feature type="sequence conflict" description="In Ref. 3." evidence="10" ref="3">
    <location>
        <begin position="53"/>
        <end position="54"/>
    </location>
</feature>
<protein>
    <recommendedName>
        <fullName>Leukocyte-specific transcript 1 protein</fullName>
    </recommendedName>
    <alternativeName>
        <fullName>Protein B144</fullName>
    </alternativeName>
</protein>
<dbReference type="EMBL" id="M18187">
    <property type="protein sequence ID" value="AAA37273.1"/>
    <property type="status" value="ALT_FRAME"/>
    <property type="molecule type" value="mRNA"/>
</dbReference>
<dbReference type="EMBL" id="AF000427">
    <property type="protein sequence ID" value="AAB87001.1"/>
    <property type="molecule type" value="mRNA"/>
</dbReference>
<dbReference type="EMBL" id="AF000428">
    <property type="protein sequence ID" value="AAB87002.1"/>
    <property type="molecule type" value="mRNA"/>
</dbReference>
<dbReference type="EMBL" id="AF109719">
    <property type="protein sequence ID" value="AAC82482.1"/>
    <property type="status" value="ALT_SEQ"/>
    <property type="molecule type" value="Genomic_DNA"/>
</dbReference>
<dbReference type="PIR" id="I49515">
    <property type="entry name" value="I49515"/>
</dbReference>
<dbReference type="SMR" id="O08843"/>
<dbReference type="FunCoup" id="O08843">
    <property type="interactions" value="96"/>
</dbReference>
<dbReference type="STRING" id="10090.ENSMUSP00000094949"/>
<dbReference type="iPTMnet" id="O08843"/>
<dbReference type="PhosphoSitePlus" id="O08843"/>
<dbReference type="SwissPalm" id="O08843"/>
<dbReference type="jPOST" id="O08843"/>
<dbReference type="PaxDb" id="10090-ENSMUSP00000094949"/>
<dbReference type="ProteomicsDB" id="290182">
    <molecule id="O08843-1"/>
</dbReference>
<dbReference type="ProteomicsDB" id="290183">
    <molecule id="O08843-2"/>
</dbReference>
<dbReference type="AGR" id="MGI:1096324"/>
<dbReference type="MGI" id="MGI:1096324">
    <property type="gene designation" value="Lst1"/>
</dbReference>
<dbReference type="eggNOG" id="ENOG502TDBU">
    <property type="taxonomic scope" value="Eukaryota"/>
</dbReference>
<dbReference type="InParanoid" id="O08843"/>
<dbReference type="PhylomeDB" id="O08843"/>
<dbReference type="ChiTaRS" id="Lst1">
    <property type="organism name" value="mouse"/>
</dbReference>
<dbReference type="PRO" id="PR:O08843"/>
<dbReference type="Proteomes" id="UP000000589">
    <property type="component" value="Unplaced"/>
</dbReference>
<dbReference type="RNAct" id="O08843">
    <property type="molecule type" value="protein"/>
</dbReference>
<dbReference type="GO" id="GO:0005737">
    <property type="term" value="C:cytoplasm"/>
    <property type="evidence" value="ECO:0000250"/>
    <property type="project" value="UniProtKB"/>
</dbReference>
<dbReference type="GO" id="GO:0016020">
    <property type="term" value="C:membrane"/>
    <property type="evidence" value="ECO:0000250"/>
    <property type="project" value="UniProtKB"/>
</dbReference>
<dbReference type="GO" id="GO:0000902">
    <property type="term" value="P:cell morphogenesis"/>
    <property type="evidence" value="ECO:0007669"/>
    <property type="project" value="InterPro"/>
</dbReference>
<dbReference type="GO" id="GO:0016358">
    <property type="term" value="P:dendrite development"/>
    <property type="evidence" value="ECO:0000314"/>
    <property type="project" value="UniProtKB"/>
</dbReference>
<dbReference type="GO" id="GO:0006955">
    <property type="term" value="P:immune response"/>
    <property type="evidence" value="ECO:0007669"/>
    <property type="project" value="InterPro"/>
</dbReference>
<dbReference type="GO" id="GO:0050672">
    <property type="term" value="P:negative regulation of lymphocyte proliferation"/>
    <property type="evidence" value="ECO:0000250"/>
    <property type="project" value="UniProtKB"/>
</dbReference>
<dbReference type="GO" id="GO:0008360">
    <property type="term" value="P:regulation of cell shape"/>
    <property type="evidence" value="ECO:0007669"/>
    <property type="project" value="UniProtKB-KW"/>
</dbReference>
<dbReference type="InterPro" id="IPR007775">
    <property type="entry name" value="Leukocyte-sp_tscrpt_1_LST1"/>
</dbReference>
<dbReference type="PANTHER" id="PTHR15452">
    <property type="entry name" value="LEUKOCYTE-SPECIFIC TRANSCRIPT 1 PROTEIN"/>
    <property type="match status" value="1"/>
</dbReference>
<dbReference type="PANTHER" id="PTHR15452:SF5">
    <property type="entry name" value="LEUKOCYTE-SPECIFIC TRANSCRIPT 1 PROTEIN"/>
    <property type="match status" value="1"/>
</dbReference>
<dbReference type="Pfam" id="PF05083">
    <property type="entry name" value="LST1"/>
    <property type="match status" value="1"/>
</dbReference>
<dbReference type="PIRSF" id="PIRSF037638">
    <property type="entry name" value="Leukocyte-sp_tscrpt_1_LST1"/>
    <property type="match status" value="1"/>
</dbReference>
<reference evidence="10" key="1">
    <citation type="journal article" date="1987" name="Immunogenetics">
        <title>A gene in the H-2S:H-2D interval of the major histocompatibility complex which is transcribed in B cells and macrophages.</title>
        <authorList>
            <person name="Tsuge I."/>
            <person name="Shen F.-W."/>
            <person name="Steinmetz M."/>
            <person name="Boyse E.A."/>
        </authorList>
    </citation>
    <scope>NUCLEOTIDE SEQUENCE [MRNA] (ISOFORM 1)</scope>
    <source>
        <tissue evidence="5">B-cell</tissue>
    </source>
</reference>
<reference evidence="10" key="2">
    <citation type="journal article" date="1997" name="Genomics">
        <title>Complex expression pattern of the TNF region gene LST1 through differential regulation, initiation, and alternative splicing.</title>
        <authorList>
            <person name="de Baey A."/>
            <person name="Fellerhoff B."/>
            <person name="Maier S."/>
            <person name="Martinozzi S."/>
            <person name="Weidle U."/>
            <person name="Weiss E.H."/>
        </authorList>
    </citation>
    <scope>NUCLEOTIDE SEQUENCE [MRNA] (ISOFORMS 1 AND 2)</scope>
    <source>
        <strain evidence="6">BALB/cJ</strain>
        <tissue evidence="6">Macrophage</tissue>
    </source>
</reference>
<reference evidence="12" key="3">
    <citation type="submission" date="1999-10" db="EMBL/GenBank/DDBJ databases">
        <title>Sequence of the mouse major histocompatibility class III region.</title>
        <authorList>
            <person name="Rowen L."/>
            <person name="Qin S."/>
            <person name="Madan A."/>
            <person name="Abbasi N."/>
            <person name="James R."/>
            <person name="Dickhoff R."/>
            <person name="Shaffer T."/>
            <person name="Ratcliffe A."/>
            <person name="Loretz C."/>
            <person name="Lasky S."/>
            <person name="Hood L."/>
        </authorList>
    </citation>
    <scope>NUCLEOTIDE SEQUENCE</scope>
</reference>
<reference evidence="10" key="4">
    <citation type="journal article" date="2001" name="Exp. Cell Res.">
        <title>Functional analysis of B144/LST1: a gene in the tumor necrosis factor cluster that induces formation of long filopodia in eukaryotic cells.</title>
        <authorList>
            <person name="Raghunathan A."/>
            <person name="Sivakamasundari R."/>
            <person name="Wolenski J."/>
            <person name="Poddar R."/>
            <person name="Weissman S.M."/>
        </authorList>
    </citation>
    <scope>FUNCTION</scope>
    <scope>SUBCELLULAR LOCATION</scope>
    <scope>TISSUE SPECIFICITY</scope>
</reference>
<reference key="5">
    <citation type="journal article" date="2009" name="Immunity">
        <title>The phagosomal proteome in interferon-gamma-activated macrophages.</title>
        <authorList>
            <person name="Trost M."/>
            <person name="English L."/>
            <person name="Lemieux S."/>
            <person name="Courcelles M."/>
            <person name="Desjardins M."/>
            <person name="Thibault P."/>
        </authorList>
    </citation>
    <scope>IDENTIFICATION BY MASS SPECTROMETRY [LARGE SCALE ANALYSIS]</scope>
</reference>
<organism evidence="11">
    <name type="scientific">Mus musculus</name>
    <name type="common">Mouse</name>
    <dbReference type="NCBI Taxonomy" id="10090"/>
    <lineage>
        <taxon>Eukaryota</taxon>
        <taxon>Metazoa</taxon>
        <taxon>Chordata</taxon>
        <taxon>Craniata</taxon>
        <taxon>Vertebrata</taxon>
        <taxon>Euteleostomi</taxon>
        <taxon>Mammalia</taxon>
        <taxon>Eutheria</taxon>
        <taxon>Euarchontoglires</taxon>
        <taxon>Glires</taxon>
        <taxon>Rodentia</taxon>
        <taxon>Myomorpha</taxon>
        <taxon>Muroidea</taxon>
        <taxon>Muridae</taxon>
        <taxon>Murinae</taxon>
        <taxon>Mus</taxon>
        <taxon>Mus</taxon>
    </lineage>
</organism>
<evidence type="ECO:0000250" key="1"/>
<evidence type="ECO:0000250" key="2">
    <source>
        <dbReference type="UniProtKB" id="O00453"/>
    </source>
</evidence>
<evidence type="ECO:0000255" key="3"/>
<evidence type="ECO:0000269" key="4">
    <source>
    </source>
</evidence>
<evidence type="ECO:0000269" key="5">
    <source>
    </source>
</evidence>
<evidence type="ECO:0000269" key="6">
    <source>
    </source>
</evidence>
<evidence type="ECO:0000303" key="7">
    <source>
    </source>
</evidence>
<evidence type="ECO:0000303" key="8">
    <source>
    </source>
</evidence>
<evidence type="ECO:0000303" key="9">
    <source>
    </source>
</evidence>
<evidence type="ECO:0000305" key="10"/>
<evidence type="ECO:0000312" key="11">
    <source>
        <dbReference type="EMBL" id="AAB87001.1"/>
    </source>
</evidence>
<evidence type="ECO:0000312" key="12">
    <source>
        <dbReference type="EMBL" id="AAC82482.1"/>
    </source>
</evidence>
<gene>
    <name type="primary">Lst1</name>
    <name type="synonym">B144</name>
</gene>
<proteinExistence type="evidence at protein level"/>
<comment type="function">
    <text evidence="2 4 7">Possible role in modulating immune responses. Has an inhibitory effect on lymphocyte proliferation. Induces morphological changes including production of filopodia and microspikes when overexpressed in a variety of cell types and may be involved in dendritic cell maturation.</text>
</comment>
<comment type="subcellular location">
    <subcellularLocation>
        <location evidence="1">Membrane</location>
        <topology evidence="1">Single-pass membrane protein</topology>
    </subcellularLocation>
    <text evidence="1">Also detected in a perinuclear region corresponding to the localization of the Golgi apparatus and throughout the cytoplasm.</text>
</comment>
<comment type="alternative products">
    <event type="alternative splicing"/>
    <isoform>
        <id>O08843-1</id>
        <name evidence="6">1</name>
        <name evidence="6">m17r</name>
        <sequence type="displayed"/>
    </isoform>
    <isoform>
        <id>O08843-2</id>
        <name evidence="6">2</name>
        <name evidence="6">m21r</name>
        <sequence type="described" ref="VSP_050588"/>
    </isoform>
</comment>
<comment type="tissue specificity">
    <text evidence="4">Expressed in spleen and at lower levels in thymus and liver.</text>
</comment>
<comment type="similarity">
    <text evidence="10">Belongs to the LST1 family.</text>
</comment>
<comment type="sequence caution" evidence="10">
    <conflict type="frameshift">
        <sequence resource="EMBL-CDS" id="AAA37273"/>
    </conflict>
</comment>
<comment type="sequence caution" evidence="10">
    <conflict type="erroneous gene model prediction">
        <sequence resource="EMBL-CDS" id="AAC82482"/>
    </conflict>
</comment>